<proteinExistence type="inferred from homology"/>
<reference key="1">
    <citation type="journal article" date="1999" name="Nature">
        <title>Sequence and analysis of chromosome 4 of the plant Arabidopsis thaliana.</title>
        <authorList>
            <person name="Mayer K.F.X."/>
            <person name="Schueller C."/>
            <person name="Wambutt R."/>
            <person name="Murphy G."/>
            <person name="Volckaert G."/>
            <person name="Pohl T."/>
            <person name="Duesterhoeft A."/>
            <person name="Stiekema W."/>
            <person name="Entian K.-D."/>
            <person name="Terryn N."/>
            <person name="Harris B."/>
            <person name="Ansorge W."/>
            <person name="Brandt P."/>
            <person name="Grivell L.A."/>
            <person name="Rieger M."/>
            <person name="Weichselgartner M."/>
            <person name="de Simone V."/>
            <person name="Obermaier B."/>
            <person name="Mache R."/>
            <person name="Mueller M."/>
            <person name="Kreis M."/>
            <person name="Delseny M."/>
            <person name="Puigdomenech P."/>
            <person name="Watson M."/>
            <person name="Schmidtheini T."/>
            <person name="Reichert B."/>
            <person name="Portetelle D."/>
            <person name="Perez-Alonso M."/>
            <person name="Boutry M."/>
            <person name="Bancroft I."/>
            <person name="Vos P."/>
            <person name="Hoheisel J."/>
            <person name="Zimmermann W."/>
            <person name="Wedler H."/>
            <person name="Ridley P."/>
            <person name="Langham S.-A."/>
            <person name="McCullagh B."/>
            <person name="Bilham L."/>
            <person name="Robben J."/>
            <person name="van der Schueren J."/>
            <person name="Grymonprez B."/>
            <person name="Chuang Y.-J."/>
            <person name="Vandenbussche F."/>
            <person name="Braeken M."/>
            <person name="Weltjens I."/>
            <person name="Voet M."/>
            <person name="Bastiaens I."/>
            <person name="Aert R."/>
            <person name="Defoor E."/>
            <person name="Weitzenegger T."/>
            <person name="Bothe G."/>
            <person name="Ramsperger U."/>
            <person name="Hilbert H."/>
            <person name="Braun M."/>
            <person name="Holzer E."/>
            <person name="Brandt A."/>
            <person name="Peters S."/>
            <person name="van Staveren M."/>
            <person name="Dirkse W."/>
            <person name="Mooijman P."/>
            <person name="Klein Lankhorst R."/>
            <person name="Rose M."/>
            <person name="Hauf J."/>
            <person name="Koetter P."/>
            <person name="Berneiser S."/>
            <person name="Hempel S."/>
            <person name="Feldpausch M."/>
            <person name="Lamberth S."/>
            <person name="Van den Daele H."/>
            <person name="De Keyser A."/>
            <person name="Buysshaert C."/>
            <person name="Gielen J."/>
            <person name="Villarroel R."/>
            <person name="De Clercq R."/>
            <person name="van Montagu M."/>
            <person name="Rogers J."/>
            <person name="Cronin A."/>
            <person name="Quail M.A."/>
            <person name="Bray-Allen S."/>
            <person name="Clark L."/>
            <person name="Doggett J."/>
            <person name="Hall S."/>
            <person name="Kay M."/>
            <person name="Lennard N."/>
            <person name="McLay K."/>
            <person name="Mayes R."/>
            <person name="Pettett A."/>
            <person name="Rajandream M.A."/>
            <person name="Lyne M."/>
            <person name="Benes V."/>
            <person name="Rechmann S."/>
            <person name="Borkova D."/>
            <person name="Bloecker H."/>
            <person name="Scharfe M."/>
            <person name="Grimm M."/>
            <person name="Loehnert T.-H."/>
            <person name="Dose S."/>
            <person name="de Haan M."/>
            <person name="Maarse A.C."/>
            <person name="Schaefer M."/>
            <person name="Mueller-Auer S."/>
            <person name="Gabel C."/>
            <person name="Fuchs M."/>
            <person name="Fartmann B."/>
            <person name="Granderath K."/>
            <person name="Dauner D."/>
            <person name="Herzl A."/>
            <person name="Neumann S."/>
            <person name="Argiriou A."/>
            <person name="Vitale D."/>
            <person name="Liguori R."/>
            <person name="Piravandi E."/>
            <person name="Massenet O."/>
            <person name="Quigley F."/>
            <person name="Clabauld G."/>
            <person name="Muendlein A."/>
            <person name="Felber R."/>
            <person name="Schnabl S."/>
            <person name="Hiller R."/>
            <person name="Schmidt W."/>
            <person name="Lecharny A."/>
            <person name="Aubourg S."/>
            <person name="Chefdor F."/>
            <person name="Cooke R."/>
            <person name="Berger C."/>
            <person name="Monfort A."/>
            <person name="Casacuberta E."/>
            <person name="Gibbons T."/>
            <person name="Weber N."/>
            <person name="Vandenbol M."/>
            <person name="Bargues M."/>
            <person name="Terol J."/>
            <person name="Torres A."/>
            <person name="Perez-Perez A."/>
            <person name="Purnelle B."/>
            <person name="Bent E."/>
            <person name="Johnson S."/>
            <person name="Tacon D."/>
            <person name="Jesse T."/>
            <person name="Heijnen L."/>
            <person name="Schwarz S."/>
            <person name="Scholler P."/>
            <person name="Heber S."/>
            <person name="Francs P."/>
            <person name="Bielke C."/>
            <person name="Frishman D."/>
            <person name="Haase D."/>
            <person name="Lemcke K."/>
            <person name="Mewes H.-W."/>
            <person name="Stocker S."/>
            <person name="Zaccaria P."/>
            <person name="Bevan M."/>
            <person name="Wilson R.K."/>
            <person name="de la Bastide M."/>
            <person name="Habermann K."/>
            <person name="Parnell L."/>
            <person name="Dedhia N."/>
            <person name="Gnoj L."/>
            <person name="Schutz K."/>
            <person name="Huang E."/>
            <person name="Spiegel L."/>
            <person name="Sekhon M."/>
            <person name="Murray J."/>
            <person name="Sheet P."/>
            <person name="Cordes M."/>
            <person name="Abu-Threideh J."/>
            <person name="Stoneking T."/>
            <person name="Kalicki J."/>
            <person name="Graves T."/>
            <person name="Harmon G."/>
            <person name="Edwards J."/>
            <person name="Latreille P."/>
            <person name="Courtney L."/>
            <person name="Cloud J."/>
            <person name="Abbott A."/>
            <person name="Scott K."/>
            <person name="Johnson D."/>
            <person name="Minx P."/>
            <person name="Bentley D."/>
            <person name="Fulton B."/>
            <person name="Miller N."/>
            <person name="Greco T."/>
            <person name="Kemp K."/>
            <person name="Kramer J."/>
            <person name="Fulton L."/>
            <person name="Mardis E."/>
            <person name="Dante M."/>
            <person name="Pepin K."/>
            <person name="Hillier L.W."/>
            <person name="Nelson J."/>
            <person name="Spieth J."/>
            <person name="Ryan E."/>
            <person name="Andrews S."/>
            <person name="Geisel C."/>
            <person name="Layman D."/>
            <person name="Du H."/>
            <person name="Ali J."/>
            <person name="Berghoff A."/>
            <person name="Jones K."/>
            <person name="Drone K."/>
            <person name="Cotton M."/>
            <person name="Joshu C."/>
            <person name="Antonoiu B."/>
            <person name="Zidanic M."/>
            <person name="Strong C."/>
            <person name="Sun H."/>
            <person name="Lamar B."/>
            <person name="Yordan C."/>
            <person name="Ma P."/>
            <person name="Zhong J."/>
            <person name="Preston R."/>
            <person name="Vil D."/>
            <person name="Shekher M."/>
            <person name="Matero A."/>
            <person name="Shah R."/>
            <person name="Swaby I.K."/>
            <person name="O'Shaughnessy A."/>
            <person name="Rodriguez M."/>
            <person name="Hoffman J."/>
            <person name="Till S."/>
            <person name="Granat S."/>
            <person name="Shohdy N."/>
            <person name="Hasegawa A."/>
            <person name="Hameed A."/>
            <person name="Lodhi M."/>
            <person name="Johnson A."/>
            <person name="Chen E."/>
            <person name="Marra M.A."/>
            <person name="Martienssen R."/>
            <person name="McCombie W.R."/>
        </authorList>
    </citation>
    <scope>NUCLEOTIDE SEQUENCE [LARGE SCALE GENOMIC DNA]</scope>
    <source>
        <strain>cv. Columbia</strain>
    </source>
</reference>
<reference key="2">
    <citation type="journal article" date="2017" name="Plant J.">
        <title>Araport11: a complete reannotation of the Arabidopsis thaliana reference genome.</title>
        <authorList>
            <person name="Cheng C.Y."/>
            <person name="Krishnakumar V."/>
            <person name="Chan A.P."/>
            <person name="Thibaud-Nissen F."/>
            <person name="Schobel S."/>
            <person name="Town C.D."/>
        </authorList>
    </citation>
    <scope>GENOME REANNOTATION</scope>
    <source>
        <strain>cv. Columbia</strain>
    </source>
</reference>
<reference key="3">
    <citation type="journal article" date="2003" name="Plant Physiol.">
        <title>The Arabidopsis STICHEL gene is a regulator of trichome branch number and encodes a novel protein.</title>
        <authorList>
            <person name="Ilgenfritz H."/>
            <person name="Bouyer D."/>
            <person name="Schnittger A."/>
            <person name="Mathur J."/>
            <person name="Kirik V."/>
            <person name="Schwab B."/>
            <person name="Chua N.H."/>
            <person name="Juergens G."/>
            <person name="Huelskamp M."/>
        </authorList>
    </citation>
    <scope>GENE FAMILY</scope>
</reference>
<organism>
    <name type="scientific">Arabidopsis thaliana</name>
    <name type="common">Mouse-ear cress</name>
    <dbReference type="NCBI Taxonomy" id="3702"/>
    <lineage>
        <taxon>Eukaryota</taxon>
        <taxon>Viridiplantae</taxon>
        <taxon>Streptophyta</taxon>
        <taxon>Embryophyta</taxon>
        <taxon>Tracheophyta</taxon>
        <taxon>Spermatophyta</taxon>
        <taxon>Magnoliopsida</taxon>
        <taxon>eudicotyledons</taxon>
        <taxon>Gunneridae</taxon>
        <taxon>Pentapetalae</taxon>
        <taxon>rosids</taxon>
        <taxon>malvids</taxon>
        <taxon>Brassicales</taxon>
        <taxon>Brassicaceae</taxon>
        <taxon>Camelineae</taxon>
        <taxon>Arabidopsis</taxon>
    </lineage>
</organism>
<evidence type="ECO:0000250" key="1">
    <source>
        <dbReference type="UniProtKB" id="P06710"/>
    </source>
</evidence>
<evidence type="ECO:0000255" key="2"/>
<evidence type="ECO:0000256" key="3">
    <source>
        <dbReference type="SAM" id="MobiDB-lite"/>
    </source>
</evidence>
<evidence type="ECO:0000305" key="4"/>
<dbReference type="EMBL" id="AL035356">
    <property type="protein sequence ID" value="CAA22984.1"/>
    <property type="status" value="ALT_SEQ"/>
    <property type="molecule type" value="Genomic_DNA"/>
</dbReference>
<dbReference type="EMBL" id="AL161562">
    <property type="protein sequence ID" value="CAB79389.1"/>
    <property type="status" value="ALT_SEQ"/>
    <property type="molecule type" value="Genomic_DNA"/>
</dbReference>
<dbReference type="EMBL" id="CP002687">
    <property type="protein sequence ID" value="AEE84957.1"/>
    <property type="molecule type" value="Genomic_DNA"/>
</dbReference>
<dbReference type="EMBL" id="CP002687">
    <property type="protein sequence ID" value="AEE84958.1"/>
    <property type="molecule type" value="Genomic_DNA"/>
</dbReference>
<dbReference type="EMBL" id="CP002687">
    <property type="protein sequence ID" value="ANM66614.1"/>
    <property type="molecule type" value="Genomic_DNA"/>
</dbReference>
<dbReference type="PIR" id="T05555">
    <property type="entry name" value="T05555"/>
</dbReference>
<dbReference type="RefSeq" id="NP_001119046.1">
    <property type="nucleotide sequence ID" value="NM_001125574.2"/>
</dbReference>
<dbReference type="RefSeq" id="NP_001328498.1">
    <property type="nucleotide sequence ID" value="NM_001341707.1"/>
</dbReference>
<dbReference type="RefSeq" id="NP_001328499.1">
    <property type="nucleotide sequence ID" value="NM_001341709.1"/>
</dbReference>
<dbReference type="RefSeq" id="NP_001328500.1">
    <property type="nucleotide sequence ID" value="NM_001341708.1"/>
</dbReference>
<dbReference type="RefSeq" id="NP_194210.2">
    <property type="nucleotide sequence ID" value="NM_118612.2"/>
</dbReference>
<dbReference type="SMR" id="F4JRP8"/>
<dbReference type="FunCoup" id="F4JRP8">
    <property type="interactions" value="545"/>
</dbReference>
<dbReference type="STRING" id="3702.F4JRP8"/>
<dbReference type="iPTMnet" id="F4JRP8"/>
<dbReference type="PaxDb" id="3702-AT4G24790.2"/>
<dbReference type="ProteomicsDB" id="228412"/>
<dbReference type="EnsemblPlants" id="AT4G24790.1">
    <property type="protein sequence ID" value="AT4G24790.1"/>
    <property type="gene ID" value="AT4G24790"/>
</dbReference>
<dbReference type="EnsemblPlants" id="AT4G24790.2">
    <property type="protein sequence ID" value="AT4G24790.2"/>
    <property type="gene ID" value="AT4G24790"/>
</dbReference>
<dbReference type="EnsemblPlants" id="AT4G24790.5">
    <property type="protein sequence ID" value="AT4G24790.5"/>
    <property type="gene ID" value="AT4G24790"/>
</dbReference>
<dbReference type="GeneID" id="828581"/>
<dbReference type="Gramene" id="AT4G24790.1">
    <property type="protein sequence ID" value="AT4G24790.1"/>
    <property type="gene ID" value="AT4G24790"/>
</dbReference>
<dbReference type="Gramene" id="AT4G24790.2">
    <property type="protein sequence ID" value="AT4G24790.2"/>
    <property type="gene ID" value="AT4G24790"/>
</dbReference>
<dbReference type="Gramene" id="AT4G24790.5">
    <property type="protein sequence ID" value="AT4G24790.5"/>
    <property type="gene ID" value="AT4G24790"/>
</dbReference>
<dbReference type="KEGG" id="ath:AT4G24790"/>
<dbReference type="Araport" id="AT4G24790"/>
<dbReference type="TAIR" id="AT4G24790"/>
<dbReference type="eggNOG" id="KOG0989">
    <property type="taxonomic scope" value="Eukaryota"/>
</dbReference>
<dbReference type="HOGENOM" id="CLU_009072_1_0_1"/>
<dbReference type="InParanoid" id="F4JRP8"/>
<dbReference type="PRO" id="PR:F4JRP8"/>
<dbReference type="Proteomes" id="UP000006548">
    <property type="component" value="Chromosome 4"/>
</dbReference>
<dbReference type="ExpressionAtlas" id="F4JRP8">
    <property type="expression patterns" value="baseline and differential"/>
</dbReference>
<dbReference type="GO" id="GO:0009360">
    <property type="term" value="C:DNA polymerase III complex"/>
    <property type="evidence" value="ECO:0007669"/>
    <property type="project" value="InterPro"/>
</dbReference>
<dbReference type="GO" id="GO:0005524">
    <property type="term" value="F:ATP binding"/>
    <property type="evidence" value="ECO:0007669"/>
    <property type="project" value="UniProtKB-KW"/>
</dbReference>
<dbReference type="GO" id="GO:0003677">
    <property type="term" value="F:DNA binding"/>
    <property type="evidence" value="ECO:0007669"/>
    <property type="project" value="InterPro"/>
</dbReference>
<dbReference type="GO" id="GO:0003887">
    <property type="term" value="F:DNA-directed DNA polymerase activity"/>
    <property type="evidence" value="ECO:0007669"/>
    <property type="project" value="InterPro"/>
</dbReference>
<dbReference type="GO" id="GO:0046872">
    <property type="term" value="F:metal ion binding"/>
    <property type="evidence" value="ECO:0007669"/>
    <property type="project" value="UniProtKB-KW"/>
</dbReference>
<dbReference type="GO" id="GO:0006260">
    <property type="term" value="P:DNA replication"/>
    <property type="evidence" value="ECO:0007669"/>
    <property type="project" value="InterPro"/>
</dbReference>
<dbReference type="CDD" id="cd00009">
    <property type="entry name" value="AAA"/>
    <property type="match status" value="1"/>
</dbReference>
<dbReference type="CDD" id="cd18137">
    <property type="entry name" value="HLD_clamp_pol_III_gamma_tau"/>
    <property type="match status" value="1"/>
</dbReference>
<dbReference type="FunFam" id="1.10.8.60:FF:000013">
    <property type="entry name" value="DNA polymerase III subunit gamma/tau"/>
    <property type="match status" value="1"/>
</dbReference>
<dbReference type="Gene3D" id="1.10.8.60">
    <property type="match status" value="1"/>
</dbReference>
<dbReference type="Gene3D" id="1.20.272.10">
    <property type="match status" value="1"/>
</dbReference>
<dbReference type="Gene3D" id="3.40.50.300">
    <property type="entry name" value="P-loop containing nucleotide triphosphate hydrolases"/>
    <property type="match status" value="1"/>
</dbReference>
<dbReference type="InterPro" id="IPR008921">
    <property type="entry name" value="DNA_pol3_clamp-load_cplx_C"/>
</dbReference>
<dbReference type="InterPro" id="IPR012763">
    <property type="entry name" value="DNA_pol_III_sug/sutau_N"/>
</dbReference>
<dbReference type="InterPro" id="IPR050238">
    <property type="entry name" value="DNA_Rep/Repair_Clamp_Loader"/>
</dbReference>
<dbReference type="InterPro" id="IPR054506">
    <property type="entry name" value="DnaA_N-like_STI"/>
</dbReference>
<dbReference type="InterPro" id="IPR045085">
    <property type="entry name" value="HLD_clamp_pol_III_gamma_tau"/>
</dbReference>
<dbReference type="InterPro" id="IPR027417">
    <property type="entry name" value="P-loop_NTPase"/>
</dbReference>
<dbReference type="NCBIfam" id="TIGR02397">
    <property type="entry name" value="dnaX_nterm"/>
    <property type="match status" value="1"/>
</dbReference>
<dbReference type="PANTHER" id="PTHR11669:SF0">
    <property type="entry name" value="PROTEIN STICHEL-LIKE 2"/>
    <property type="match status" value="1"/>
</dbReference>
<dbReference type="PANTHER" id="PTHR11669">
    <property type="entry name" value="REPLICATION FACTOR C / DNA POLYMERASE III GAMMA-TAU SUBUNIT"/>
    <property type="match status" value="1"/>
</dbReference>
<dbReference type="Pfam" id="PF13177">
    <property type="entry name" value="DNA_pol3_delta2"/>
    <property type="match status" value="1"/>
</dbReference>
<dbReference type="Pfam" id="PF23007">
    <property type="entry name" value="DnaA_N-like_STI"/>
    <property type="match status" value="1"/>
</dbReference>
<dbReference type="Pfam" id="PF22608">
    <property type="entry name" value="DNAX_ATPase_lid"/>
    <property type="match status" value="1"/>
</dbReference>
<dbReference type="SUPFAM" id="SSF52540">
    <property type="entry name" value="P-loop containing nucleoside triphosphate hydrolases"/>
    <property type="match status" value="1"/>
</dbReference>
<dbReference type="SUPFAM" id="SSF48019">
    <property type="entry name" value="post-AAA+ oligomerization domain-like"/>
    <property type="match status" value="1"/>
</dbReference>
<feature type="chain" id="PRO_0000422978" description="Protein STICHEL-like 2">
    <location>
        <begin position="1"/>
        <end position="857"/>
    </location>
</feature>
<feature type="region of interest" description="Disordered" evidence="3">
    <location>
        <begin position="593"/>
        <end position="629"/>
    </location>
</feature>
<feature type="region of interest" description="Disordered" evidence="3">
    <location>
        <begin position="787"/>
        <end position="845"/>
    </location>
</feature>
<feature type="coiled-coil region" evidence="2">
    <location>
        <begin position="544"/>
        <end position="576"/>
    </location>
</feature>
<feature type="compositionally biased region" description="Basic and acidic residues" evidence="3">
    <location>
        <begin position="599"/>
        <end position="610"/>
    </location>
</feature>
<feature type="compositionally biased region" description="Polar residues" evidence="3">
    <location>
        <begin position="834"/>
        <end position="843"/>
    </location>
</feature>
<feature type="binding site" evidence="2">
    <location>
        <begin position="280"/>
        <end position="287"/>
    </location>
    <ligand>
        <name>ATP</name>
        <dbReference type="ChEBI" id="CHEBI:30616"/>
    </ligand>
</feature>
<feature type="binding site" evidence="1">
    <location>
        <position position="299"/>
    </location>
    <ligand>
        <name>Zn(2+)</name>
        <dbReference type="ChEBI" id="CHEBI:29105"/>
    </ligand>
</feature>
<feature type="binding site" evidence="1">
    <location>
        <position position="309"/>
    </location>
    <ligand>
        <name>Zn(2+)</name>
        <dbReference type="ChEBI" id="CHEBI:29105"/>
    </ligand>
</feature>
<feature type="binding site" evidence="1">
    <location>
        <position position="312"/>
    </location>
    <ligand>
        <name>Zn(2+)</name>
        <dbReference type="ChEBI" id="CHEBI:29105"/>
    </ligand>
</feature>
<feature type="binding site" evidence="1">
    <location>
        <position position="315"/>
    </location>
    <ligand>
        <name>Zn(2+)</name>
        <dbReference type="ChEBI" id="CHEBI:29105"/>
    </ligand>
</feature>
<sequence length="857" mass="93834">MGETRRHSVDVPITRTLVALRRVRSLRDPCTTSMSKFASLLDNVKWETGSNNGISLQFVEHADDACKAAADAPVGLIPFGSYSIMEELESGCDLHKLSSKVINVEGDACSRSSERSCSDLSVKGRDLACNAPSISHVEEAGSGGRYRTHYSTKLASSVGEYGSRLGSPMNSTNHSYYGDEDVDFDSQSNRGCGITYCWSRTPRYRGSNQSSDVEEYPLLPGNGNGESDVVTPSHEVLSRSLSQKFRPKSFDELVGQEVVVKCLLSTILRGRITSVYLFHGPRGTGKTSTSKIFAAALNCLSQAAHSRPCGLCSECKSYFSGRGRDVMETDSGKLNRPSYLRSLIKSASLPPVSSRFKVFIIDECQLLCQETWGTLLNSLDNFSQHSVFILVTSELEKLPRNVLSRSQKYHFSKVCDADISTKLAKICIEEGIDFDQGAVDFIASKSDGSLRDAEIMLDQLSLLGKRITTSLAYKLIGVVSDDELLDLLDLAMSSDTSNTVIRARELMRSKIDPMQLISQLANVIMDIIAGNSQESSSATRLRFLTRHTSEEEMQKLRNALKILSDAEKHLRASKNQTTWLTVALLQLSNTDSSSFATDENGRNQINKDVELSSTSSGCPGDVIKSDAEKGQERNCNETVESVWKTVTDLCCSDSLKRFLWKRGRLTSLTVDKGVAIAELEFYTPQHVARAEKSWKLIADSFQSVLGCNVEIQMNLVISACSPPKSAKAAASLFFGLFSCSRRMLHKSYLTTRTDSDCASEKPAVTNSLRSCQGNVLRARSVRSSANASSRMSCSSDQGDATSAMCTPHIPPGEKRPEDDTDVLCWKKTPLGKGQSETQNSKSSRLIGRVLPCSTAAN</sequence>
<comment type="similarity">
    <text evidence="4">Belongs to the DnaX/STICHEL family.</text>
</comment>
<comment type="sequence caution" evidence="4">
    <conflict type="erroneous gene model prediction">
        <sequence resource="EMBL-CDS" id="CAA22984"/>
    </conflict>
</comment>
<comment type="sequence caution" evidence="4">
    <conflict type="erroneous gene model prediction">
        <sequence resource="EMBL-CDS" id="CAB79389"/>
    </conflict>
</comment>
<gene>
    <name type="ordered locus">At4g24790</name>
    <name type="ORF">F22K18.10</name>
</gene>
<protein>
    <recommendedName>
        <fullName>Protein STICHEL-like 2</fullName>
    </recommendedName>
</protein>
<accession>F4JRP8</accession>
<accession>Q9SB72</accession>
<name>STIL2_ARATH</name>
<keyword id="KW-0067">ATP-binding</keyword>
<keyword id="KW-0175">Coiled coil</keyword>
<keyword id="KW-0479">Metal-binding</keyword>
<keyword id="KW-0547">Nucleotide-binding</keyword>
<keyword id="KW-1185">Reference proteome</keyword>
<keyword id="KW-0862">Zinc</keyword>